<protein>
    <recommendedName>
        <fullName evidence="1">Large ribosomal subunit protein uL1</fullName>
    </recommendedName>
    <alternativeName>
        <fullName evidence="2">50S ribosomal protein L1</fullName>
    </alternativeName>
</protein>
<sequence length="230" mass="24684">MAKKRGKKYQDALKKVDSKKEYAVKDAVQLVKDIAYANFDSTIEVAFNLNVDTKQADQQLRGAVVLPNGTGKDQTVIVFANGENAKAAQEAGADFVGDDDLVEKIQDGWLDFDVAIATPDMMPKVGRLGRVLGPKGLMPNPKTGTVTMDVAKAVSDAKAGQVTYRTDRDGNVAVPFGKVSFDTDKLVENLATLEDIVAKARPASVRGTYIKHASISSTFGPSVTLDLTTF</sequence>
<reference key="1">
    <citation type="journal article" date="2008" name="DNA Res.">
        <title>Comparative genome analysis of Lactobacillus reuteri and Lactobacillus fermentum reveal a genomic island for reuterin and cobalamin production.</title>
        <authorList>
            <person name="Morita H."/>
            <person name="Toh H."/>
            <person name="Fukuda S."/>
            <person name="Horikawa H."/>
            <person name="Oshima K."/>
            <person name="Suzuki T."/>
            <person name="Murakami M."/>
            <person name="Hisamatsu S."/>
            <person name="Kato Y."/>
            <person name="Takizawa T."/>
            <person name="Fukuoka H."/>
            <person name="Yoshimura T."/>
            <person name="Itoh K."/>
            <person name="O'Sullivan D.J."/>
            <person name="McKay L.L."/>
            <person name="Ohno H."/>
            <person name="Kikuchi J."/>
            <person name="Masaoka T."/>
            <person name="Hattori M."/>
        </authorList>
    </citation>
    <scope>NUCLEOTIDE SEQUENCE [LARGE SCALE GENOMIC DNA]</scope>
    <source>
        <strain>JCM 1112</strain>
    </source>
</reference>
<gene>
    <name evidence="1" type="primary">rplA</name>
    <name type="ordered locus">LAR_0298</name>
</gene>
<keyword id="KW-0678">Repressor</keyword>
<keyword id="KW-0687">Ribonucleoprotein</keyword>
<keyword id="KW-0689">Ribosomal protein</keyword>
<keyword id="KW-0694">RNA-binding</keyword>
<keyword id="KW-0699">rRNA-binding</keyword>
<keyword id="KW-0810">Translation regulation</keyword>
<keyword id="KW-0820">tRNA-binding</keyword>
<evidence type="ECO:0000255" key="1">
    <source>
        <dbReference type="HAMAP-Rule" id="MF_01318"/>
    </source>
</evidence>
<evidence type="ECO:0000305" key="2"/>
<dbReference type="EMBL" id="AP007281">
    <property type="protein sequence ID" value="BAG24814.1"/>
    <property type="molecule type" value="Genomic_DNA"/>
</dbReference>
<dbReference type="RefSeq" id="WP_003666300.1">
    <property type="nucleotide sequence ID" value="NC_010609.1"/>
</dbReference>
<dbReference type="SMR" id="B2G5T2"/>
<dbReference type="GeneID" id="77190113"/>
<dbReference type="KEGG" id="lrf:LAR_0298"/>
<dbReference type="HOGENOM" id="CLU_062853_0_0_9"/>
<dbReference type="GO" id="GO:0015934">
    <property type="term" value="C:large ribosomal subunit"/>
    <property type="evidence" value="ECO:0007669"/>
    <property type="project" value="InterPro"/>
</dbReference>
<dbReference type="GO" id="GO:0019843">
    <property type="term" value="F:rRNA binding"/>
    <property type="evidence" value="ECO:0007669"/>
    <property type="project" value="UniProtKB-UniRule"/>
</dbReference>
<dbReference type="GO" id="GO:0003735">
    <property type="term" value="F:structural constituent of ribosome"/>
    <property type="evidence" value="ECO:0007669"/>
    <property type="project" value="InterPro"/>
</dbReference>
<dbReference type="GO" id="GO:0000049">
    <property type="term" value="F:tRNA binding"/>
    <property type="evidence" value="ECO:0007669"/>
    <property type="project" value="UniProtKB-KW"/>
</dbReference>
<dbReference type="GO" id="GO:0006417">
    <property type="term" value="P:regulation of translation"/>
    <property type="evidence" value="ECO:0007669"/>
    <property type="project" value="UniProtKB-KW"/>
</dbReference>
<dbReference type="GO" id="GO:0006412">
    <property type="term" value="P:translation"/>
    <property type="evidence" value="ECO:0007669"/>
    <property type="project" value="UniProtKB-UniRule"/>
</dbReference>
<dbReference type="CDD" id="cd00403">
    <property type="entry name" value="Ribosomal_L1"/>
    <property type="match status" value="1"/>
</dbReference>
<dbReference type="FunFam" id="3.40.50.790:FF:000001">
    <property type="entry name" value="50S ribosomal protein L1"/>
    <property type="match status" value="1"/>
</dbReference>
<dbReference type="Gene3D" id="3.30.190.20">
    <property type="match status" value="1"/>
</dbReference>
<dbReference type="Gene3D" id="3.40.50.790">
    <property type="match status" value="1"/>
</dbReference>
<dbReference type="HAMAP" id="MF_01318_B">
    <property type="entry name" value="Ribosomal_uL1_B"/>
    <property type="match status" value="1"/>
</dbReference>
<dbReference type="InterPro" id="IPR005878">
    <property type="entry name" value="Ribosom_uL1_bac-type"/>
</dbReference>
<dbReference type="InterPro" id="IPR002143">
    <property type="entry name" value="Ribosomal_uL1"/>
</dbReference>
<dbReference type="InterPro" id="IPR023674">
    <property type="entry name" value="Ribosomal_uL1-like"/>
</dbReference>
<dbReference type="InterPro" id="IPR028364">
    <property type="entry name" value="Ribosomal_uL1/biogenesis"/>
</dbReference>
<dbReference type="InterPro" id="IPR016095">
    <property type="entry name" value="Ribosomal_uL1_3-a/b-sand"/>
</dbReference>
<dbReference type="InterPro" id="IPR023673">
    <property type="entry name" value="Ribosomal_uL1_CS"/>
</dbReference>
<dbReference type="NCBIfam" id="TIGR01169">
    <property type="entry name" value="rplA_bact"/>
    <property type="match status" value="1"/>
</dbReference>
<dbReference type="PANTHER" id="PTHR36427">
    <property type="entry name" value="54S RIBOSOMAL PROTEIN L1, MITOCHONDRIAL"/>
    <property type="match status" value="1"/>
</dbReference>
<dbReference type="PANTHER" id="PTHR36427:SF3">
    <property type="entry name" value="LARGE RIBOSOMAL SUBUNIT PROTEIN UL1M"/>
    <property type="match status" value="1"/>
</dbReference>
<dbReference type="Pfam" id="PF00687">
    <property type="entry name" value="Ribosomal_L1"/>
    <property type="match status" value="1"/>
</dbReference>
<dbReference type="PIRSF" id="PIRSF002155">
    <property type="entry name" value="Ribosomal_L1"/>
    <property type="match status" value="1"/>
</dbReference>
<dbReference type="SUPFAM" id="SSF56808">
    <property type="entry name" value="Ribosomal protein L1"/>
    <property type="match status" value="1"/>
</dbReference>
<dbReference type="PROSITE" id="PS01199">
    <property type="entry name" value="RIBOSOMAL_L1"/>
    <property type="match status" value="1"/>
</dbReference>
<name>RL1_LIMRJ</name>
<accession>B2G5T2</accession>
<organism>
    <name type="scientific">Limosilactobacillus reuteri subsp. reuteri (strain JCM 1112)</name>
    <name type="common">Lactobacillus reuteri</name>
    <dbReference type="NCBI Taxonomy" id="557433"/>
    <lineage>
        <taxon>Bacteria</taxon>
        <taxon>Bacillati</taxon>
        <taxon>Bacillota</taxon>
        <taxon>Bacilli</taxon>
        <taxon>Lactobacillales</taxon>
        <taxon>Lactobacillaceae</taxon>
        <taxon>Limosilactobacillus</taxon>
    </lineage>
</organism>
<feature type="chain" id="PRO_1000141420" description="Large ribosomal subunit protein uL1">
    <location>
        <begin position="1"/>
        <end position="230"/>
    </location>
</feature>
<comment type="function">
    <text evidence="1">Binds directly to 23S rRNA. The L1 stalk is quite mobile in the ribosome, and is involved in E site tRNA release.</text>
</comment>
<comment type="function">
    <text evidence="1">Protein L1 is also a translational repressor protein, it controls the translation of the L11 operon by binding to its mRNA.</text>
</comment>
<comment type="subunit">
    <text evidence="1">Part of the 50S ribosomal subunit.</text>
</comment>
<comment type="similarity">
    <text evidence="1">Belongs to the universal ribosomal protein uL1 family.</text>
</comment>
<proteinExistence type="inferred from homology"/>